<organism>
    <name type="scientific">Hepatitis B virus genotype D subtype adw (isolate United Kingdom/adyw/1979)</name>
    <name type="common">HBV-D</name>
    <dbReference type="NCBI Taxonomy" id="10419"/>
    <lineage>
        <taxon>Viruses</taxon>
        <taxon>Riboviria</taxon>
        <taxon>Pararnavirae</taxon>
        <taxon>Artverviricota</taxon>
        <taxon>Revtraviricetes</taxon>
        <taxon>Blubervirales</taxon>
        <taxon>Hepadnaviridae</taxon>
        <taxon>Orthohepadnavirus</taxon>
        <taxon>Hepatitis B virus</taxon>
    </lineage>
</organism>
<keyword id="KW-0007">Acetylation</keyword>
<keyword id="KW-0024">Alternative initiation</keyword>
<keyword id="KW-0025">Alternative splicing</keyword>
<keyword id="KW-1166">Caveolin-mediated endocytosis of virus by host</keyword>
<keyword id="KW-1170">Fusion of virus membrane with host endosomal membrane</keyword>
<keyword id="KW-1168">Fusion of virus membrane with host membrane</keyword>
<keyword id="KW-0325">Glycoprotein</keyword>
<keyword id="KW-0945">Host-virus interaction</keyword>
<keyword id="KW-0449">Lipoprotein</keyword>
<keyword id="KW-0472">Membrane</keyword>
<keyword id="KW-0519">Myristate</keyword>
<keyword id="KW-0812">Transmembrane</keyword>
<keyword id="KW-1133">Transmembrane helix</keyword>
<keyword id="KW-1161">Viral attachment to host cell</keyword>
<keyword id="KW-0261">Viral envelope protein</keyword>
<keyword id="KW-1162">Viral penetration into host cytoplasm</keyword>
<keyword id="KW-0946">Virion</keyword>
<keyword id="KW-1164">Virus endocytosis by host</keyword>
<keyword id="KW-1160">Virus entry into host cell</keyword>
<accession>P03139</accession>
<proteinExistence type="evidence at protein level"/>
<gene>
    <name evidence="3" type="primary">S</name>
</gene>
<name>HBSAG_HBVD1</name>
<feature type="initiator methionine" description="Removed; by host" evidence="3">
    <location>
        <position position="1"/>
    </location>
</feature>
<feature type="chain" id="PRO_0000038109" description="Large envelope protein" evidence="3">
    <location>
        <begin position="2"/>
        <end position="389"/>
    </location>
</feature>
<feature type="topological domain" description="Intravirion; in internal conformation" evidence="3">
    <location>
        <begin position="2"/>
        <end position="242"/>
    </location>
</feature>
<feature type="topological domain" description="Virion surface; in external conformation" evidence="3">
    <location>
        <begin position="2"/>
        <end position="170"/>
    </location>
</feature>
<feature type="transmembrane region" description="Helical; Name=TM1; Note=In external conformation" evidence="3">
    <location>
        <begin position="171"/>
        <end position="191"/>
    </location>
</feature>
<feature type="topological domain" description="Intravirion; in external conformation" evidence="3">
    <location>
        <begin position="192"/>
        <end position="242"/>
    </location>
</feature>
<feature type="transmembrane region" description="Helical; Name=TM2" evidence="3">
    <location>
        <begin position="243"/>
        <end position="263"/>
    </location>
</feature>
<feature type="topological domain" description="Virion surface" evidence="3">
    <location>
        <begin position="264"/>
        <end position="337"/>
    </location>
</feature>
<feature type="transmembrane region" description="Helical" evidence="3">
    <location>
        <begin position="338"/>
        <end position="358"/>
    </location>
</feature>
<feature type="topological domain" description="Intravirion" evidence="3">
    <location>
        <begin position="359"/>
        <end position="364"/>
    </location>
</feature>
<feature type="transmembrane region" description="Helical; Name=TM3" evidence="3">
    <location>
        <begin position="365"/>
        <end position="387"/>
    </location>
</feature>
<feature type="topological domain" description="Virion surface" evidence="3">
    <location>
        <begin position="388"/>
        <end position="389"/>
    </location>
</feature>
<feature type="region of interest" description="Pre-S" evidence="3">
    <location>
        <begin position="2"/>
        <end position="163"/>
    </location>
</feature>
<feature type="region of interest" description="Pre-S1" evidence="3">
    <location>
        <begin position="2"/>
        <end position="108"/>
    </location>
</feature>
<feature type="region of interest" description="Disordered" evidence="4">
    <location>
        <begin position="76"/>
        <end position="102"/>
    </location>
</feature>
<feature type="region of interest" description="Pre-S2" evidence="3">
    <location>
        <begin position="109"/>
        <end position="163"/>
    </location>
</feature>
<feature type="compositionally biased region" description="Polar residues" evidence="4">
    <location>
        <begin position="85"/>
        <end position="95"/>
    </location>
</feature>
<feature type="lipid moiety-binding region" description="N-myristoyl glycine; by host" evidence="3">
    <location>
        <position position="2"/>
    </location>
</feature>
<feature type="glycosylation site" description="N-linked (GlcNAc...) asparagine; by host" evidence="3">
    <location>
        <position position="309"/>
    </location>
</feature>
<feature type="splice variant" id="VSP_031400" description="In isoform S." evidence="5">
    <location>
        <begin position="1"/>
        <end position="163"/>
    </location>
</feature>
<feature type="splice variant" id="VSP_031401" description="In isoform M." evidence="5">
    <location>
        <begin position="1"/>
        <end position="108"/>
    </location>
</feature>
<feature type="modified residue" description="N-acetylmethionine" evidence="1">
    <location sequence="P03139-2">
        <position position="1"/>
    </location>
</feature>
<protein>
    <recommendedName>
        <fullName evidence="3">Large envelope protein</fullName>
    </recommendedName>
    <alternativeName>
        <fullName evidence="3">L glycoprotein</fullName>
    </alternativeName>
    <alternativeName>
        <fullName evidence="3">L-HBsAg</fullName>
        <shortName evidence="3">LHB</shortName>
    </alternativeName>
    <alternativeName>
        <fullName evidence="3">Large S protein</fullName>
    </alternativeName>
    <alternativeName>
        <fullName evidence="3">Large surface protein</fullName>
    </alternativeName>
    <alternativeName>
        <fullName evidence="3">Major surface antigen</fullName>
    </alternativeName>
</protein>
<comment type="function">
    <text evidence="3">The large envelope protein exists in two topological conformations, one which is termed 'external' or Le-HBsAg and the other 'internal' or Li-HBsAg. In its external conformation the protein attaches the virus to cell receptors and thereby initiating infection. This interaction determines the species specificity and liver tropism. This attachment induces virion internalization predominantly through caveolin-mediated endocytosis. The large envelope protein also assures fusion between virion membrane and endosomal membrane. In its internal conformation the protein plays a role in virion morphogenesis and mediates the contact with the nucleocapsid like a matrix protein.</text>
</comment>
<comment type="function">
    <text evidence="3">The middle envelope protein plays an important role in the budding of the virion. It is involved in the induction of budding in a nucleocapsid independent way. In this process the majority of envelope proteins bud to form subviral lipoprotein particles of 22 nm of diameter that do not contain a nucleocapsid.</text>
</comment>
<comment type="subunit">
    <molecule>Isoform L</molecule>
    <text evidence="2">In its internal form (Li-HBsAg), interacts with the capsid protein and with the isoform S. Interacts with host chaperone CANX.</text>
</comment>
<comment type="subunit">
    <molecule>Isoform M</molecule>
    <text evidence="2">Associates with host chaperone CANX through its pre-S2 N glycan; this association may be essential for isoform M proper secretion.</text>
</comment>
<comment type="subunit">
    <molecule>Isoform S</molecule>
    <text evidence="2">Interacts with isoform L. Interacts with the antigens of satellite virus HDV (HDVAgs); this interaction is required for encapsidation of HDV genomic RNA.</text>
</comment>
<comment type="interaction">
    <interactant intactId="EBI-16065097">
        <id>P03139-1</id>
    </interactant>
    <interactant intactId="EBI-373637">
        <id>O75843</id>
        <label>AP1G2</label>
    </interactant>
    <organismsDiffer>true</organismsDiffer>
    <experiments>6</experiments>
</comment>
<comment type="subcellular location">
    <subcellularLocation>
        <location evidence="3">Virion membrane</location>
    </subcellularLocation>
</comment>
<comment type="alternative products">
    <event type="alternative splicing"/>
    <event type="alternative initiation"/>
    <isoform>
        <id>P03139-1</id>
        <name>L</name>
        <name>Large envelope protein</name>
        <name>LHB</name>
        <name>L-HBsAg</name>
        <sequence type="displayed"/>
    </isoform>
    <isoform>
        <id>P03139-2</id>
        <name>M</name>
        <name>Middle envelope protein</name>
        <name>MHB</name>
        <name>M-HBsAg</name>
        <sequence type="described" ref="VSP_031401"/>
    </isoform>
    <isoform>
        <id>P03139-3</id>
        <name>S</name>
        <name>Small envelope protein</name>
        <name>SHB</name>
        <name>S-HBsAg</name>
        <sequence type="described" ref="VSP_031400"/>
    </isoform>
</comment>
<comment type="domain">
    <text evidence="3">The large envelope protein is synthesized with the pre-S region at the cytosolic side of the endoplasmic reticulum and, hence will be within the virion after budding. Therefore the pre-S region is not N-glycosylated. Later a post-translational translocation of N-terminal pre-S and TM1 domains occur in about 50% of proteins at the virion surface. These molecules change their topology by an unknown mechanism, resulting in exposure of pre-S region at virion surface. For isoform M in contrast, the pre-S2 region is translocated cotranslationally to the endoplasmic reticulum lumen and is N-glycosylated.</text>
</comment>
<comment type="PTM">
    <text evidence="1 3">Isoform M is N-terminally acetylated by host at a ratio of 90%, and N-glycosylated by host at the pre-S2 region.</text>
</comment>
<comment type="PTM">
    <text evidence="3">Myristoylated.</text>
</comment>
<comment type="biotechnology">
    <text>Systematic vaccination of individuals at risk of exposure to the virus has been the main method of controlling the morbidity and mortality associated with hepatitis B. The first hepatitis B vaccine was manufactured by the purification and inactivation of HBsAg obtained from the plasma of chronic hepatitis B virus carriers. The vaccine is now produced by recombinant DNA techniques and expression of the S isoform in yeast cells. The pre-S region do not seem to induce strong enough antigenic response.</text>
</comment>
<comment type="similarity">
    <text evidence="3">Belongs to the orthohepadnavirus major surface antigen family.</text>
</comment>
<comment type="sequence caution" evidence="5">
    <conflict type="erroneous initiation">
        <sequence resource="EMBL-CDS" id="AAA45487"/>
    </conflict>
</comment>
<organismHost>
    <name type="scientific">Homo sapiens</name>
    <name type="common">Human</name>
    <dbReference type="NCBI Taxonomy" id="9606"/>
</organismHost>
<organismHost>
    <name type="scientific">Pan troglodytes</name>
    <name type="common">Chimpanzee</name>
    <dbReference type="NCBI Taxonomy" id="9598"/>
</organismHost>
<dbReference type="EMBL" id="J02202">
    <property type="protein sequence ID" value="AAA45487.1"/>
    <property type="status" value="ALT_INIT"/>
    <property type="molecule type" value="Genomic_RNA"/>
</dbReference>
<dbReference type="PIR" id="A93217">
    <property type="entry name" value="SAVLAJ"/>
</dbReference>
<dbReference type="SMR" id="P03139"/>
<dbReference type="DIP" id="DIP-61744N"/>
<dbReference type="IntAct" id="P03139">
    <property type="interactions" value="1"/>
</dbReference>
<dbReference type="GlyCosmos" id="P03139">
    <property type="glycosylation" value="1 site, No reported glycans"/>
</dbReference>
<dbReference type="ABCD" id="P03139">
    <property type="antibodies" value="1 sequenced antibody"/>
</dbReference>
<dbReference type="GO" id="GO:0016020">
    <property type="term" value="C:membrane"/>
    <property type="evidence" value="ECO:0007669"/>
    <property type="project" value="UniProtKB-UniRule"/>
</dbReference>
<dbReference type="GO" id="GO:0019031">
    <property type="term" value="C:viral envelope"/>
    <property type="evidence" value="ECO:0007669"/>
    <property type="project" value="UniProtKB-KW"/>
</dbReference>
<dbReference type="GO" id="GO:0055036">
    <property type="term" value="C:virion membrane"/>
    <property type="evidence" value="ECO:0007669"/>
    <property type="project" value="UniProtKB-SubCell"/>
</dbReference>
<dbReference type="GO" id="GO:0075513">
    <property type="term" value="P:caveolin-mediated endocytosis of virus by host cell"/>
    <property type="evidence" value="ECO:0007669"/>
    <property type="project" value="UniProtKB-KW"/>
</dbReference>
<dbReference type="GO" id="GO:0039654">
    <property type="term" value="P:fusion of virus membrane with host endosome membrane"/>
    <property type="evidence" value="ECO:0007669"/>
    <property type="project" value="UniProtKB-KW"/>
</dbReference>
<dbReference type="GO" id="GO:0019062">
    <property type="term" value="P:virion attachment to host cell"/>
    <property type="evidence" value="ECO:0007669"/>
    <property type="project" value="UniProtKB-UniRule"/>
</dbReference>
<dbReference type="HAMAP" id="MF_04075">
    <property type="entry name" value="HBV_HBSAG"/>
    <property type="match status" value="1"/>
</dbReference>
<dbReference type="InterPro" id="IPR000349">
    <property type="entry name" value="HBV_HBSAG"/>
</dbReference>
<dbReference type="Pfam" id="PF00695">
    <property type="entry name" value="vMSA"/>
    <property type="match status" value="1"/>
</dbReference>
<sequence>MGQNLSTSNPLGFFPDHQLDPAFRANTNNPDWDFNPNKDTWPDANKVGAGAFGLGFTPPHGGLLGWSPQAQGIMQTLPANPPPASTNRQSGRQPTPLSPPLRTTHPQAMHWNSTTFHQTLQDPRVRGLYFPAGGSSSGTVNPVPTTTSPISSIFSRIGDPALNMENITSGFLGPLLVLQAGFFLLTRILTIPQSLDSWWTSLNFLGGTTVCLGQNSQSPISNHSPTSCPPTCPGYRWMCLRRFIIFLFILLLCLIFLLVLLDYQGMLPVCPLIPGSSTTSTGSCRTCTTPAQGISMYPSCCCTKPSDGNCTCIPIPSSWAFGKFLWEWASARFSWLSLLVPFVQWFVGLSPIVWLSVIWMMWYWGPSLYSILSPFLPLLPIFFCLWAYI</sequence>
<evidence type="ECO:0000250" key="1">
    <source>
        <dbReference type="UniProtKB" id="P03138"/>
    </source>
</evidence>
<evidence type="ECO:0000250" key="2">
    <source>
        <dbReference type="UniProtKB" id="P03141"/>
    </source>
</evidence>
<evidence type="ECO:0000255" key="3">
    <source>
        <dbReference type="HAMAP-Rule" id="MF_04075"/>
    </source>
</evidence>
<evidence type="ECO:0000256" key="4">
    <source>
        <dbReference type="SAM" id="MobiDB-lite"/>
    </source>
</evidence>
<evidence type="ECO:0000305" key="5"/>
<reference key="1">
    <citation type="journal article" date="1979" name="Nature">
        <title>Hepatitis B virus genes and their expression in E. coli.</title>
        <authorList>
            <person name="Pasek M."/>
            <person name="Goto T."/>
            <person name="Gilbert W."/>
            <person name="Zink B."/>
            <person name="Schaller H."/>
            <person name="McKay P."/>
            <person name="Leadbetter G."/>
            <person name="Murray K."/>
        </authorList>
    </citation>
    <scope>NUCLEOTIDE SEQUENCE [GENOMIC RNA]</scope>
</reference>
<reference key="2">
    <citation type="journal article" date="1994" name="J. Gen. Virol.">
        <title>Biogenesis of the hepatitis B viral middle (M) surface protein in a human hepatoma cell line: demonstration of an alternative secretion pathway.</title>
        <authorList>
            <person name="Sheu S.Y."/>
            <person name="Lo S.J."/>
        </authorList>
    </citation>
    <scope>SUBCELLULAR LOCATION (ISOFORM M)</scope>
</reference>
<reference key="3">
    <citation type="journal article" date="1996" name="Intervirology">
        <title>Functions of the large hepatitis B virus surface protein in viral particle morphogenesis.</title>
        <authorList>
            <person name="Bruss V."/>
            <person name="Gerhardt E."/>
            <person name="Vieluf K."/>
            <person name="Wunderlich G."/>
        </authorList>
    </citation>
    <scope>REVIEW</scope>
</reference>
<reference key="4">
    <citation type="journal article" date="1998" name="Adv. Exp. Med. Biol.">
        <title>Role of glycan processing in hepatitis B virus envelope protein trafficking.</title>
        <authorList>
            <person name="Block T.M."/>
            <person name="Lu X."/>
            <person name="Mehta A."/>
            <person name="Park J."/>
            <person name="Blumberg B.S."/>
            <person name="Dwek R."/>
        </authorList>
    </citation>
    <scope>REVIEW</scope>
</reference>
<reference key="5">
    <citation type="journal article" date="2004" name="Virus Res.">
        <title>Envelopment of the hepatitis B virus nucleocapsid.</title>
        <authorList>
            <person name="Bruss V."/>
        </authorList>
    </citation>
    <scope>REVIEW</scope>
</reference>
<reference key="6">
    <citation type="journal article" date="2006" name="Cancer Sci.">
        <title>Hepatitis B virus pre-S mutants, endoplasmic reticulum stress and hepatocarcinogenesis.</title>
        <authorList>
            <person name="Wang H.C."/>
            <person name="Huang W."/>
            <person name="Lai M.D."/>
            <person name="Su I.J."/>
        </authorList>
    </citation>
    <scope>REVIEW</scope>
</reference>